<name>CHEZ_HELPY</name>
<protein>
    <recommendedName>
        <fullName evidence="4">Protein phosphatase CheZ</fullName>
        <ecNumber evidence="2">3.1.3.-</ecNumber>
    </recommendedName>
    <alternativeName>
        <fullName>Chemotaxis protein CheZ</fullName>
    </alternativeName>
</protein>
<evidence type="ECO:0000256" key="1">
    <source>
        <dbReference type="SAM" id="MobiDB-lite"/>
    </source>
</evidence>
<evidence type="ECO:0000269" key="2">
    <source>
    </source>
</evidence>
<evidence type="ECO:0000269" key="3">
    <source>
    </source>
</evidence>
<evidence type="ECO:0000303" key="4">
    <source>
    </source>
</evidence>
<evidence type="ECO:0000305" key="5"/>
<gene>
    <name evidence="4" type="primary">cheZ</name>
    <name type="ordered locus">HP_0170</name>
</gene>
<comment type="function">
    <text evidence="2 3">Plays an important role in bacterial chemotaxis signal transduction pathway by accelerating the dephosphorylation of phosphorylated CheY (CheY-P). Also dephosphorylates CheV2 but not CheV1 or CheV3 (PubMed:20497335). In addition, forms a distinct chemotaxis regulatory complex with ChePep independently of the core chemotaxis signaling proteins (PubMed:26061894).</text>
</comment>
<comment type="subunit">
    <text evidence="3">Interacts with ChePep; this interaction is essential for each other polar localization.</text>
</comment>
<comment type="subcellular location">
    <subcellularLocation>
        <location evidence="3">Cytoplasm</location>
    </subcellularLocation>
    <text evidence="3">Localizes to the cell poles.</text>
</comment>
<comment type="similarity">
    <text evidence="5">Belongs to the CheZ family.</text>
</comment>
<accession>O24976</accession>
<proteinExistence type="evidence at protein level"/>
<reference key="1">
    <citation type="journal article" date="1997" name="Nature">
        <title>The complete genome sequence of the gastric pathogen Helicobacter pylori.</title>
        <authorList>
            <person name="Tomb J.-F."/>
            <person name="White O."/>
            <person name="Kerlavage A.R."/>
            <person name="Clayton R.A."/>
            <person name="Sutton G.G."/>
            <person name="Fleischmann R.D."/>
            <person name="Ketchum K.A."/>
            <person name="Klenk H.-P."/>
            <person name="Gill S.R."/>
            <person name="Dougherty B.A."/>
            <person name="Nelson K.E."/>
            <person name="Quackenbush J."/>
            <person name="Zhou L."/>
            <person name="Kirkness E.F."/>
            <person name="Peterson S.N."/>
            <person name="Loftus B.J."/>
            <person name="Richardson D.L."/>
            <person name="Dodson R.J."/>
            <person name="Khalak H.G."/>
            <person name="Glodek A."/>
            <person name="McKenney K."/>
            <person name="FitzGerald L.M."/>
            <person name="Lee N."/>
            <person name="Adams M.D."/>
            <person name="Hickey E.K."/>
            <person name="Berg D.E."/>
            <person name="Gocayne J.D."/>
            <person name="Utterback T.R."/>
            <person name="Peterson J.D."/>
            <person name="Kelley J.M."/>
            <person name="Cotton M.D."/>
            <person name="Weidman J.F."/>
            <person name="Fujii C."/>
            <person name="Bowman C."/>
            <person name="Watthey L."/>
            <person name="Wallin E."/>
            <person name="Hayes W.S."/>
            <person name="Borodovsky M."/>
            <person name="Karp P.D."/>
            <person name="Smith H.O."/>
            <person name="Fraser C.M."/>
            <person name="Venter J.C."/>
        </authorList>
    </citation>
    <scope>NUCLEOTIDE SEQUENCE [LARGE SCALE GENOMIC DNA]</scope>
    <source>
        <strain>ATCC 700392 / 26695</strain>
    </source>
</reference>
<reference key="2">
    <citation type="journal article" date="2010" name="Mol. Microbiol.">
        <title>A remote CheZ orthologue retains phosphatase function.</title>
        <authorList>
            <person name="Lertsethtakarn P."/>
            <person name="Ottemann K.M."/>
        </authorList>
    </citation>
    <scope>FUNCTION</scope>
    <scope>CATALYTIC ACTIVITY</scope>
    <scope>MUTAGENESIS OF ASP-189 AND GLN-193</scope>
</reference>
<reference key="3">
    <citation type="journal article" date="2015" name="Mol. Microbiol.">
        <title>Helicobacter pylori CheZ(HP) and ChePep form a novel chemotaxis-regulatory complex distinct from the core chemotaxis signaling proteins and the flagellar motor.</title>
        <authorList>
            <person name="Lertsethtakarn P."/>
            <person name="Howitt M.R."/>
            <person name="Castellon J."/>
            <person name="Amieva M.R."/>
            <person name="Ottemann K.M."/>
        </authorList>
    </citation>
    <scope>FUNCTION</scope>
    <scope>INTERACTION WITH CHEPEP</scope>
    <scope>SUBCELLULAR LOCATION</scope>
    <scope>MUTAGENESIS OF ASP-189 AND GLN-193</scope>
    <source>
        <strain>G27</strain>
    </source>
</reference>
<keyword id="KW-0963">Cytoplasm</keyword>
<keyword id="KW-0378">Hydrolase</keyword>
<keyword id="KW-1185">Reference proteome</keyword>
<organism>
    <name type="scientific">Helicobacter pylori (strain ATCC 700392 / 26695)</name>
    <name type="common">Campylobacter pylori</name>
    <dbReference type="NCBI Taxonomy" id="85962"/>
    <lineage>
        <taxon>Bacteria</taxon>
        <taxon>Pseudomonadati</taxon>
        <taxon>Campylobacterota</taxon>
        <taxon>Epsilonproteobacteria</taxon>
        <taxon>Campylobacterales</taxon>
        <taxon>Helicobacteraceae</taxon>
        <taxon>Helicobacter</taxon>
    </lineage>
</organism>
<sequence>MTQEELDALMNGGDLENLEALETKEETKEEAKEEAKEEAKEEAKEKEEIKEESSSQKMTVKKEDAEKYGKISPNEWPPPPPTEEHKVVHQLDDVTRDSEVKATQIFDQLDLIGASAEKIAKMVKKIQEPLQKHQEIFDNLHGHFPHVESFKTALNEQQEILNALKSIEEEAANCSDSSMQAMDIMQFQDIHRQKIERVVNVMRALSQYMNSLFEGKIDDSKRVSSATFITGDDDKDLASADDIEALIASFGAK</sequence>
<feature type="chain" id="PRO_0000448752" description="Protein phosphatase CheZ">
    <location>
        <begin position="1"/>
        <end position="253"/>
    </location>
</feature>
<feature type="region of interest" description="Disordered" evidence="1">
    <location>
        <begin position="1"/>
        <end position="84"/>
    </location>
</feature>
<feature type="compositionally biased region" description="Basic and acidic residues" evidence="1">
    <location>
        <begin position="21"/>
        <end position="69"/>
    </location>
</feature>
<feature type="mutagenesis site" description="Complete loss of phosphatase activity. Migrates poorly through the soft agar." evidence="2 3">
    <original>D</original>
    <variation>N</variation>
    <location>
        <position position="189"/>
    </location>
</feature>
<feature type="mutagenesis site" description="Complete loss of phosphatase activity. Migrates poorly through the soft agar." evidence="2 3">
    <original>Q</original>
    <variation>R</variation>
    <location>
        <position position="193"/>
    </location>
</feature>
<dbReference type="EC" id="3.1.3.-" evidence="2"/>
<dbReference type="EMBL" id="AE000511">
    <property type="protein sequence ID" value="AAD07242.1"/>
    <property type="molecule type" value="Genomic_DNA"/>
</dbReference>
<dbReference type="PIR" id="B64541">
    <property type="entry name" value="B64541"/>
</dbReference>
<dbReference type="RefSeq" id="NP_206969.1">
    <property type="nucleotide sequence ID" value="NC_000915.1"/>
</dbReference>
<dbReference type="RefSeq" id="WP_000191026.1">
    <property type="nucleotide sequence ID" value="NC_018939.1"/>
</dbReference>
<dbReference type="DIP" id="DIP-3127N"/>
<dbReference type="IntAct" id="O24976">
    <property type="interactions" value="1"/>
</dbReference>
<dbReference type="MINT" id="O24976"/>
<dbReference type="STRING" id="85962.HP_0170"/>
<dbReference type="PaxDb" id="85962-C694_00840"/>
<dbReference type="EnsemblBacteria" id="AAD07242">
    <property type="protein sequence ID" value="AAD07242"/>
    <property type="gene ID" value="HP_0170"/>
</dbReference>
<dbReference type="KEGG" id="heo:C694_00840"/>
<dbReference type="KEGG" id="hpy:HP_0170"/>
<dbReference type="PATRIC" id="fig|85962.47.peg.183"/>
<dbReference type="eggNOG" id="ENOG50338G0">
    <property type="taxonomic scope" value="Bacteria"/>
</dbReference>
<dbReference type="InParanoid" id="O24976"/>
<dbReference type="OrthoDB" id="5347695at2"/>
<dbReference type="Proteomes" id="UP000000429">
    <property type="component" value="Chromosome"/>
</dbReference>
<dbReference type="GO" id="GO:0005737">
    <property type="term" value="C:cytoplasm"/>
    <property type="evidence" value="ECO:0007669"/>
    <property type="project" value="UniProtKB-SubCell"/>
</dbReference>
<dbReference type="GO" id="GO:0016791">
    <property type="term" value="F:phosphatase activity"/>
    <property type="evidence" value="ECO:0007669"/>
    <property type="project" value="InterPro"/>
</dbReference>
<dbReference type="Gene3D" id="1.10.287.500">
    <property type="entry name" value="Helix hairpin bin"/>
    <property type="match status" value="1"/>
</dbReference>
<dbReference type="InterPro" id="IPR047802">
    <property type="entry name" value="CheZ_Pase"/>
</dbReference>
<dbReference type="NCBIfam" id="NF041271">
    <property type="entry name" value="Phos_CheZ"/>
    <property type="match status" value="1"/>
</dbReference>
<dbReference type="SUPFAM" id="SSF75708">
    <property type="entry name" value="Chemotaxis phosphatase CheZ"/>
    <property type="match status" value="1"/>
</dbReference>